<gene>
    <name evidence="1" type="primary">rpl24</name>
    <name type="ordered locus">APE_0358</name>
</gene>
<protein>
    <recommendedName>
        <fullName evidence="1">Large ribosomal subunit protein uL24</fullName>
    </recommendedName>
    <alternativeName>
        <fullName evidence="2">50S ribosomal protein L24</fullName>
    </alternativeName>
</protein>
<evidence type="ECO:0000255" key="1">
    <source>
        <dbReference type="HAMAP-Rule" id="MF_01326"/>
    </source>
</evidence>
<evidence type="ECO:0000305" key="2"/>
<reference key="1">
    <citation type="journal article" date="1999" name="DNA Res.">
        <title>Complete genome sequence of an aerobic hyper-thermophilic crenarchaeon, Aeropyrum pernix K1.</title>
        <authorList>
            <person name="Kawarabayasi Y."/>
            <person name="Hino Y."/>
            <person name="Horikawa H."/>
            <person name="Yamazaki S."/>
            <person name="Haikawa Y."/>
            <person name="Jin-no K."/>
            <person name="Takahashi M."/>
            <person name="Sekine M."/>
            <person name="Baba S."/>
            <person name="Ankai A."/>
            <person name="Kosugi H."/>
            <person name="Hosoyama A."/>
            <person name="Fukui S."/>
            <person name="Nagai Y."/>
            <person name="Nishijima K."/>
            <person name="Nakazawa H."/>
            <person name="Takamiya M."/>
            <person name="Masuda S."/>
            <person name="Funahashi T."/>
            <person name="Tanaka T."/>
            <person name="Kudoh Y."/>
            <person name="Yamazaki J."/>
            <person name="Kushida N."/>
            <person name="Oguchi A."/>
            <person name="Aoki K."/>
            <person name="Kubota K."/>
            <person name="Nakamura Y."/>
            <person name="Nomura N."/>
            <person name="Sako Y."/>
            <person name="Kikuchi H."/>
        </authorList>
    </citation>
    <scope>NUCLEOTIDE SEQUENCE [LARGE SCALE GENOMIC DNA]</scope>
    <source>
        <strain>ATCC 700893 / DSM 11879 / JCM 9820 / NBRC 100138 / K1</strain>
    </source>
</reference>
<accession>Q9YF83</accession>
<keyword id="KW-1185">Reference proteome</keyword>
<keyword id="KW-0687">Ribonucleoprotein</keyword>
<keyword id="KW-0689">Ribosomal protein</keyword>
<keyword id="KW-0694">RNA-binding</keyword>
<keyword id="KW-0699">rRNA-binding</keyword>
<dbReference type="EMBL" id="BA000002">
    <property type="protein sequence ID" value="BAA79313.1"/>
    <property type="molecule type" value="Genomic_DNA"/>
</dbReference>
<dbReference type="PIR" id="E72727">
    <property type="entry name" value="E72727"/>
</dbReference>
<dbReference type="RefSeq" id="WP_010865689.1">
    <property type="nucleotide sequence ID" value="NC_000854.2"/>
</dbReference>
<dbReference type="SMR" id="Q9YF83"/>
<dbReference type="STRING" id="272557.APE_0358"/>
<dbReference type="EnsemblBacteria" id="BAA79313">
    <property type="protein sequence ID" value="BAA79313"/>
    <property type="gene ID" value="APE_0358"/>
</dbReference>
<dbReference type="GeneID" id="1444572"/>
<dbReference type="KEGG" id="ape:APE_0358"/>
<dbReference type="PATRIC" id="fig|272557.25.peg.275"/>
<dbReference type="eggNOG" id="arCOG04094">
    <property type="taxonomic scope" value="Archaea"/>
</dbReference>
<dbReference type="Proteomes" id="UP000002518">
    <property type="component" value="Chromosome"/>
</dbReference>
<dbReference type="GO" id="GO:0015934">
    <property type="term" value="C:large ribosomal subunit"/>
    <property type="evidence" value="ECO:0007669"/>
    <property type="project" value="InterPro"/>
</dbReference>
<dbReference type="GO" id="GO:0019843">
    <property type="term" value="F:rRNA binding"/>
    <property type="evidence" value="ECO:0007669"/>
    <property type="project" value="UniProtKB-UniRule"/>
</dbReference>
<dbReference type="GO" id="GO:0003735">
    <property type="term" value="F:structural constituent of ribosome"/>
    <property type="evidence" value="ECO:0007669"/>
    <property type="project" value="InterPro"/>
</dbReference>
<dbReference type="GO" id="GO:0006412">
    <property type="term" value="P:translation"/>
    <property type="evidence" value="ECO:0007669"/>
    <property type="project" value="UniProtKB-UniRule"/>
</dbReference>
<dbReference type="CDD" id="cd06089">
    <property type="entry name" value="KOW_RPL26"/>
    <property type="match status" value="1"/>
</dbReference>
<dbReference type="FunFam" id="2.30.30.30:FF:000009">
    <property type="entry name" value="60S ribosomal protein L26"/>
    <property type="match status" value="1"/>
</dbReference>
<dbReference type="Gene3D" id="2.30.30.30">
    <property type="match status" value="1"/>
</dbReference>
<dbReference type="HAMAP" id="MF_01326_A">
    <property type="entry name" value="Ribosomal_uL24_A"/>
    <property type="match status" value="1"/>
</dbReference>
<dbReference type="InterPro" id="IPR005824">
    <property type="entry name" value="KOW"/>
</dbReference>
<dbReference type="InterPro" id="IPR014722">
    <property type="entry name" value="Rib_uL2_dom2"/>
</dbReference>
<dbReference type="InterPro" id="IPR005825">
    <property type="entry name" value="Ribosomal_uL24_CS"/>
</dbReference>
<dbReference type="InterPro" id="IPR005756">
    <property type="entry name" value="Ribosomal_uL24_euk/arc"/>
</dbReference>
<dbReference type="InterPro" id="IPR041988">
    <property type="entry name" value="Ribosomal_uL24_KOW"/>
</dbReference>
<dbReference type="InterPro" id="IPR008991">
    <property type="entry name" value="Translation_prot_SH3-like_sf"/>
</dbReference>
<dbReference type="NCBIfam" id="TIGR01080">
    <property type="entry name" value="rplX_A_E"/>
    <property type="match status" value="1"/>
</dbReference>
<dbReference type="PANTHER" id="PTHR11143">
    <property type="entry name" value="60S RIBOSOMAL PROTEIN L26 FAMILY MEMBER"/>
    <property type="match status" value="1"/>
</dbReference>
<dbReference type="Pfam" id="PF00467">
    <property type="entry name" value="KOW"/>
    <property type="match status" value="1"/>
</dbReference>
<dbReference type="Pfam" id="PF16906">
    <property type="entry name" value="Ribosomal_L26"/>
    <property type="match status" value="1"/>
</dbReference>
<dbReference type="SMART" id="SM00739">
    <property type="entry name" value="KOW"/>
    <property type="match status" value="1"/>
</dbReference>
<dbReference type="SUPFAM" id="SSF50104">
    <property type="entry name" value="Translation proteins SH3-like domain"/>
    <property type="match status" value="1"/>
</dbReference>
<dbReference type="PROSITE" id="PS01108">
    <property type="entry name" value="RIBOSOMAL_L24"/>
    <property type="match status" value="1"/>
</dbReference>
<sequence length="132" mass="15129">MPVLTRSRQPRKQRRALYRAPLHARQKLVSATLSPELREKYGVRSLPVRKGDKVRVMRGDFKGHEGKVVKVDLRRLRIYIDGVTVTKADGTPVFRPIHPSNVMIVELDLSDEYRKKMIERRAAGRRGGGNSE</sequence>
<organism>
    <name type="scientific">Aeropyrum pernix (strain ATCC 700893 / DSM 11879 / JCM 9820 / NBRC 100138 / K1)</name>
    <dbReference type="NCBI Taxonomy" id="272557"/>
    <lineage>
        <taxon>Archaea</taxon>
        <taxon>Thermoproteota</taxon>
        <taxon>Thermoprotei</taxon>
        <taxon>Desulfurococcales</taxon>
        <taxon>Desulfurococcaceae</taxon>
        <taxon>Aeropyrum</taxon>
    </lineage>
</organism>
<name>RL24_AERPE</name>
<feature type="chain" id="PRO_0000130765" description="Large ribosomal subunit protein uL24">
    <location>
        <begin position="1"/>
        <end position="132"/>
    </location>
</feature>
<comment type="function">
    <text evidence="1">One of two assembly initiator proteins, it binds directly to the 5'-end of the 23S rRNA, where it nucleates assembly of the 50S subunit.</text>
</comment>
<comment type="function">
    <text evidence="1">Located at the polypeptide exit tunnel on the outside of the subunit.</text>
</comment>
<comment type="subunit">
    <text evidence="1">Part of the 50S ribosomal subunit.</text>
</comment>
<comment type="similarity">
    <text evidence="1">Belongs to the universal ribosomal protein uL24 family.</text>
</comment>
<proteinExistence type="inferred from homology"/>